<feature type="signal peptide" evidence="2">
    <location>
        <begin position="1"/>
        <end position="19"/>
    </location>
</feature>
<feature type="propeptide" id="PRO_0000400679" evidence="1">
    <location>
        <begin position="20"/>
        <end position="50"/>
    </location>
</feature>
<feature type="peptide" id="PRO_0000400680" description="U7-theraphotoxin-Hhn1a 1">
    <location>
        <begin position="51"/>
        <end position="90"/>
    </location>
</feature>
<feature type="disulfide bond" evidence="1">
    <location>
        <begin position="51"/>
        <end position="65"/>
    </location>
</feature>
<feature type="disulfide bond" evidence="1">
    <location>
        <begin position="58"/>
        <end position="70"/>
    </location>
</feature>
<feature type="disulfide bond" evidence="1">
    <location>
        <begin position="64"/>
        <end position="81"/>
    </location>
</feature>
<keyword id="KW-1015">Disulfide bond</keyword>
<keyword id="KW-0872">Ion channel impairing toxin</keyword>
<keyword id="KW-0960">Knottin</keyword>
<keyword id="KW-0964">Secreted</keyword>
<keyword id="KW-0732">Signal</keyword>
<keyword id="KW-0800">Toxin</keyword>
<protein>
    <recommendedName>
        <fullName>U7-theraphotoxin-Hhn1a 1</fullName>
        <shortName>U7-TRTX-Hhn1a</shortName>
    </recommendedName>
    <alternativeName>
        <fullName>Hainantoxin-XIII</fullName>
        <shortName>HNTX-XIII</shortName>
    </alternativeName>
</protein>
<evidence type="ECO:0000250" key="1"/>
<evidence type="ECO:0000255" key="2"/>
<evidence type="ECO:0000305" key="3"/>
<proteinExistence type="evidence at transcript level"/>
<organism>
    <name type="scientific">Cyriopagopus hainanus</name>
    <name type="common">Chinese bird spider</name>
    <name type="synonym">Haplopelma hainanum</name>
    <dbReference type="NCBI Taxonomy" id="209901"/>
    <lineage>
        <taxon>Eukaryota</taxon>
        <taxon>Metazoa</taxon>
        <taxon>Ecdysozoa</taxon>
        <taxon>Arthropoda</taxon>
        <taxon>Chelicerata</taxon>
        <taxon>Arachnida</taxon>
        <taxon>Araneae</taxon>
        <taxon>Mygalomorphae</taxon>
        <taxon>Theraphosidae</taxon>
        <taxon>Haplopelma</taxon>
    </lineage>
</organism>
<sequence>MKTAIFTVVLALAVFAVLSFGWEANEKALSEEFTELIHEKEAASETEARECRYFWGECHDHMPCCDWLVCRYKWPITYNICVWNRTFPEK</sequence>
<reference key="1">
    <citation type="journal article" date="2010" name="J. Proteome Res.">
        <title>Molecular diversification of peptide toxins from the tarantula Haplopelma hainanum (Ornithoctonus hainana) venom based on transcriptomic, peptidomic, and genomic analyses.</title>
        <authorList>
            <person name="Tang X."/>
            <person name="Zhang Y."/>
            <person name="Hu W."/>
            <person name="Xu D."/>
            <person name="Tao H."/>
            <person name="Yang X."/>
            <person name="Li Y."/>
            <person name="Jiang L."/>
            <person name="Liang S."/>
        </authorList>
    </citation>
    <scope>NUCLEOTIDE SEQUENCE [LARGE SCALE MRNA]</scope>
    <source>
        <tissue>Venom gland</tissue>
    </source>
</reference>
<comment type="function">
    <text evidence="1">Ion channel inhibitor.</text>
</comment>
<comment type="subcellular location">
    <subcellularLocation>
        <location evidence="1">Secreted</location>
    </subcellularLocation>
</comment>
<comment type="tissue specificity">
    <text>Expressed by the venom gland.</text>
</comment>
<comment type="domain">
    <text evidence="1">The presence of a 'disulfide through disulfide knot' structurally defines this protein as a knottin.</text>
</comment>
<comment type="similarity">
    <text evidence="3">Belongs to the neurotoxin 10 (Hwtx-1) family. 13 (Hntx-13) subfamily.</text>
</comment>
<name>H13A1_CYRHA</name>
<dbReference type="EMBL" id="GU292977">
    <property type="protein sequence ID" value="ADB56793.1"/>
    <property type="molecule type" value="mRNA"/>
</dbReference>
<dbReference type="SMR" id="D2Y2A0"/>
<dbReference type="ArachnoServer" id="AS001986">
    <property type="toxin name" value="U7-theraphotoxin-Hhn1a"/>
</dbReference>
<dbReference type="GO" id="GO:0005576">
    <property type="term" value="C:extracellular region"/>
    <property type="evidence" value="ECO:0007669"/>
    <property type="project" value="UniProtKB-SubCell"/>
</dbReference>
<dbReference type="GO" id="GO:0008200">
    <property type="term" value="F:ion channel inhibitor activity"/>
    <property type="evidence" value="ECO:0007669"/>
    <property type="project" value="InterPro"/>
</dbReference>
<dbReference type="GO" id="GO:0090729">
    <property type="term" value="F:toxin activity"/>
    <property type="evidence" value="ECO:0007669"/>
    <property type="project" value="UniProtKB-KW"/>
</dbReference>
<dbReference type="InterPro" id="IPR011696">
    <property type="entry name" value="Huwentoxin-1"/>
</dbReference>
<dbReference type="Pfam" id="PF07740">
    <property type="entry name" value="Toxin_12"/>
    <property type="match status" value="1"/>
</dbReference>
<dbReference type="SUPFAM" id="SSF57059">
    <property type="entry name" value="omega toxin-like"/>
    <property type="match status" value="1"/>
</dbReference>
<accession>D2Y2A0</accession>